<sequence length="249" mass="28342">MVRYKATISYDGTLFSGFQRQRHLRTVQEEIEKTLYKLNNGTKIIIHGAGRTDAGVHAYGQVIHFDLPQEQEVEKLRFALDTQTPEDIDVVNIEKVADDFHCRYQKHLKTYEFLVDNGRPKNPMMRHYTTHYPYTLNIKLMQDAINGLVGTHDFTGFTAAGTSVQNKVRTITKATVSRDEKTDFLVFTFSGNGFLYKQVRNMVGTLLKIGNGQMPVEQVKVILSSKNRQLAGPTISGNGLYLKEICYEN</sequence>
<comment type="function">
    <text evidence="1">Formation of pseudouridine at positions 38, 39 and 40 in the anticodon stem and loop of transfer RNAs.</text>
</comment>
<comment type="catalytic activity">
    <reaction evidence="1">
        <text>uridine(38/39/40) in tRNA = pseudouridine(38/39/40) in tRNA</text>
        <dbReference type="Rhea" id="RHEA:22376"/>
        <dbReference type="Rhea" id="RHEA-COMP:10085"/>
        <dbReference type="Rhea" id="RHEA-COMP:10087"/>
        <dbReference type="ChEBI" id="CHEBI:65314"/>
        <dbReference type="ChEBI" id="CHEBI:65315"/>
        <dbReference type="EC" id="5.4.99.12"/>
    </reaction>
</comment>
<comment type="subunit">
    <text evidence="1">Homodimer.</text>
</comment>
<comment type="similarity">
    <text evidence="1">Belongs to the tRNA pseudouridine synthase TruA family.</text>
</comment>
<keyword id="KW-0413">Isomerase</keyword>
<keyword id="KW-0819">tRNA processing</keyword>
<feature type="chain" id="PRO_0000411463" description="tRNA pseudouridine synthase A">
    <location>
        <begin position="1"/>
        <end position="249"/>
    </location>
</feature>
<feature type="active site" description="Nucleophile" evidence="1">
    <location>
        <position position="53"/>
    </location>
</feature>
<feature type="binding site" evidence="1">
    <location>
        <position position="111"/>
    </location>
    <ligand>
        <name>substrate</name>
    </ligand>
</feature>
<name>TRUA_STRPQ</name>
<gene>
    <name evidence="1" type="primary">truA</name>
    <name type="ordered locus">SPs0227</name>
</gene>
<reference key="1">
    <citation type="journal article" date="2003" name="Genome Res.">
        <title>Genome sequence of an M3 strain of Streptococcus pyogenes reveals a large-scale genomic rearrangement in invasive strains and new insights into phage evolution.</title>
        <authorList>
            <person name="Nakagawa I."/>
            <person name="Kurokawa K."/>
            <person name="Yamashita A."/>
            <person name="Nakata M."/>
            <person name="Tomiyasu Y."/>
            <person name="Okahashi N."/>
            <person name="Kawabata S."/>
            <person name="Yamazaki K."/>
            <person name="Shiba T."/>
            <person name="Yasunaga T."/>
            <person name="Hayashi H."/>
            <person name="Hattori M."/>
            <person name="Hamada S."/>
        </authorList>
    </citation>
    <scope>NUCLEOTIDE SEQUENCE [LARGE SCALE GENOMIC DNA]</scope>
    <source>
        <strain>SSI-1</strain>
    </source>
</reference>
<dbReference type="EC" id="5.4.99.12" evidence="1"/>
<dbReference type="EMBL" id="BA000034">
    <property type="protein sequence ID" value="BAC63322.1"/>
    <property type="molecule type" value="Genomic_DNA"/>
</dbReference>
<dbReference type="RefSeq" id="WP_002995162.1">
    <property type="nucleotide sequence ID" value="NC_004606.1"/>
</dbReference>
<dbReference type="SMR" id="P0DD47"/>
<dbReference type="GeneID" id="69900227"/>
<dbReference type="KEGG" id="sps:SPs0227"/>
<dbReference type="HOGENOM" id="CLU_014673_0_1_9"/>
<dbReference type="GO" id="GO:0003723">
    <property type="term" value="F:RNA binding"/>
    <property type="evidence" value="ECO:0007669"/>
    <property type="project" value="InterPro"/>
</dbReference>
<dbReference type="GO" id="GO:0160147">
    <property type="term" value="F:tRNA pseudouridine(38-40) synthase activity"/>
    <property type="evidence" value="ECO:0007669"/>
    <property type="project" value="UniProtKB-EC"/>
</dbReference>
<dbReference type="GO" id="GO:0031119">
    <property type="term" value="P:tRNA pseudouridine synthesis"/>
    <property type="evidence" value="ECO:0007669"/>
    <property type="project" value="UniProtKB-UniRule"/>
</dbReference>
<dbReference type="CDD" id="cd02570">
    <property type="entry name" value="PseudoU_synth_EcTruA"/>
    <property type="match status" value="1"/>
</dbReference>
<dbReference type="FunFam" id="3.30.70.580:FF:000001">
    <property type="entry name" value="tRNA pseudouridine synthase A"/>
    <property type="match status" value="1"/>
</dbReference>
<dbReference type="Gene3D" id="3.30.70.660">
    <property type="entry name" value="Pseudouridine synthase I, catalytic domain, C-terminal subdomain"/>
    <property type="match status" value="1"/>
</dbReference>
<dbReference type="Gene3D" id="3.30.70.580">
    <property type="entry name" value="Pseudouridine synthase I, catalytic domain, N-terminal subdomain"/>
    <property type="match status" value="1"/>
</dbReference>
<dbReference type="HAMAP" id="MF_00171">
    <property type="entry name" value="TruA"/>
    <property type="match status" value="1"/>
</dbReference>
<dbReference type="InterPro" id="IPR020103">
    <property type="entry name" value="PsdUridine_synth_cat_dom_sf"/>
</dbReference>
<dbReference type="InterPro" id="IPR001406">
    <property type="entry name" value="PsdUridine_synth_TruA"/>
</dbReference>
<dbReference type="InterPro" id="IPR020097">
    <property type="entry name" value="PsdUridine_synth_TruA_a/b_dom"/>
</dbReference>
<dbReference type="InterPro" id="IPR020095">
    <property type="entry name" value="PsdUridine_synth_TruA_C"/>
</dbReference>
<dbReference type="InterPro" id="IPR020094">
    <property type="entry name" value="TruA/RsuA/RluB/E/F_N"/>
</dbReference>
<dbReference type="NCBIfam" id="TIGR00071">
    <property type="entry name" value="hisT_truA"/>
    <property type="match status" value="1"/>
</dbReference>
<dbReference type="PANTHER" id="PTHR11142">
    <property type="entry name" value="PSEUDOURIDYLATE SYNTHASE"/>
    <property type="match status" value="1"/>
</dbReference>
<dbReference type="PANTHER" id="PTHR11142:SF0">
    <property type="entry name" value="TRNA PSEUDOURIDINE SYNTHASE-LIKE 1"/>
    <property type="match status" value="1"/>
</dbReference>
<dbReference type="Pfam" id="PF01416">
    <property type="entry name" value="PseudoU_synth_1"/>
    <property type="match status" value="2"/>
</dbReference>
<dbReference type="PIRSF" id="PIRSF001430">
    <property type="entry name" value="tRNA_psdUrid_synth"/>
    <property type="match status" value="1"/>
</dbReference>
<dbReference type="SUPFAM" id="SSF55120">
    <property type="entry name" value="Pseudouridine synthase"/>
    <property type="match status" value="1"/>
</dbReference>
<protein>
    <recommendedName>
        <fullName evidence="1">tRNA pseudouridine synthase A</fullName>
        <ecNumber evidence="1">5.4.99.12</ecNumber>
    </recommendedName>
    <alternativeName>
        <fullName evidence="1">tRNA pseudouridine(38-40) synthase</fullName>
    </alternativeName>
    <alternativeName>
        <fullName evidence="1">tRNA pseudouridylate synthase I</fullName>
    </alternativeName>
    <alternativeName>
        <fullName evidence="1">tRNA-uridine isomerase I</fullName>
    </alternativeName>
</protein>
<accession>P0DD47</accession>
<accession>Q8K5W2</accession>
<proteinExistence type="inferred from homology"/>
<evidence type="ECO:0000255" key="1">
    <source>
        <dbReference type="HAMAP-Rule" id="MF_00171"/>
    </source>
</evidence>
<organism>
    <name type="scientific">Streptococcus pyogenes serotype M3 (strain SSI-1)</name>
    <dbReference type="NCBI Taxonomy" id="193567"/>
    <lineage>
        <taxon>Bacteria</taxon>
        <taxon>Bacillati</taxon>
        <taxon>Bacillota</taxon>
        <taxon>Bacilli</taxon>
        <taxon>Lactobacillales</taxon>
        <taxon>Streptococcaceae</taxon>
        <taxon>Streptococcus</taxon>
    </lineage>
</organism>